<feature type="chain" id="PRO_0000298491" description="NADH-quinone oxidoreductase subunit I">
    <location>
        <begin position="1"/>
        <end position="162"/>
    </location>
</feature>
<feature type="domain" description="4Fe-4S ferredoxin-type 1" evidence="1">
    <location>
        <begin position="53"/>
        <end position="83"/>
    </location>
</feature>
<feature type="domain" description="4Fe-4S ferredoxin-type 2" evidence="1">
    <location>
        <begin position="93"/>
        <end position="122"/>
    </location>
</feature>
<feature type="binding site" evidence="1">
    <location>
        <position position="63"/>
    </location>
    <ligand>
        <name>[4Fe-4S] cluster</name>
        <dbReference type="ChEBI" id="CHEBI:49883"/>
        <label>1</label>
    </ligand>
</feature>
<feature type="binding site" evidence="1">
    <location>
        <position position="66"/>
    </location>
    <ligand>
        <name>[4Fe-4S] cluster</name>
        <dbReference type="ChEBI" id="CHEBI:49883"/>
        <label>1</label>
    </ligand>
</feature>
<feature type="binding site" evidence="1">
    <location>
        <position position="69"/>
    </location>
    <ligand>
        <name>[4Fe-4S] cluster</name>
        <dbReference type="ChEBI" id="CHEBI:49883"/>
        <label>1</label>
    </ligand>
</feature>
<feature type="binding site" evidence="1">
    <location>
        <position position="73"/>
    </location>
    <ligand>
        <name>[4Fe-4S] cluster</name>
        <dbReference type="ChEBI" id="CHEBI:49883"/>
        <label>2</label>
    </ligand>
</feature>
<feature type="binding site" evidence="1">
    <location>
        <position position="102"/>
    </location>
    <ligand>
        <name>[4Fe-4S] cluster</name>
        <dbReference type="ChEBI" id="CHEBI:49883"/>
        <label>2</label>
    </ligand>
</feature>
<feature type="binding site" evidence="1">
    <location>
        <position position="105"/>
    </location>
    <ligand>
        <name>[4Fe-4S] cluster</name>
        <dbReference type="ChEBI" id="CHEBI:49883"/>
        <label>2</label>
    </ligand>
</feature>
<feature type="binding site" evidence="1">
    <location>
        <position position="108"/>
    </location>
    <ligand>
        <name>[4Fe-4S] cluster</name>
        <dbReference type="ChEBI" id="CHEBI:49883"/>
        <label>2</label>
    </ligand>
</feature>
<feature type="binding site" evidence="1">
    <location>
        <position position="112"/>
    </location>
    <ligand>
        <name>[4Fe-4S] cluster</name>
        <dbReference type="ChEBI" id="CHEBI:49883"/>
        <label>1</label>
    </ligand>
</feature>
<gene>
    <name evidence="1" type="primary">nuoI</name>
    <name type="ordered locus">ELI_06625</name>
</gene>
<comment type="function">
    <text evidence="1">NDH-1 shuttles electrons from NADH, via FMN and iron-sulfur (Fe-S) centers, to quinones in the respiratory chain. The immediate electron acceptor for the enzyme in this species is believed to be ubiquinone. Couples the redox reaction to proton translocation (for every two electrons transferred, four hydrogen ions are translocated across the cytoplasmic membrane), and thus conserves the redox energy in a proton gradient.</text>
</comment>
<comment type="catalytic activity">
    <reaction evidence="1">
        <text>a quinone + NADH + 5 H(+)(in) = a quinol + NAD(+) + 4 H(+)(out)</text>
        <dbReference type="Rhea" id="RHEA:57888"/>
        <dbReference type="ChEBI" id="CHEBI:15378"/>
        <dbReference type="ChEBI" id="CHEBI:24646"/>
        <dbReference type="ChEBI" id="CHEBI:57540"/>
        <dbReference type="ChEBI" id="CHEBI:57945"/>
        <dbReference type="ChEBI" id="CHEBI:132124"/>
    </reaction>
</comment>
<comment type="cofactor">
    <cofactor evidence="1">
        <name>[4Fe-4S] cluster</name>
        <dbReference type="ChEBI" id="CHEBI:49883"/>
    </cofactor>
    <text evidence="1">Binds 2 [4Fe-4S] clusters per subunit.</text>
</comment>
<comment type="subunit">
    <text evidence="1">NDH-1 is composed of 14 different subunits. Subunits NuoA, H, J, K, L, M, N constitute the membrane sector of the complex.</text>
</comment>
<comment type="subcellular location">
    <subcellularLocation>
        <location evidence="1">Cell inner membrane</location>
        <topology evidence="1">Peripheral membrane protein</topology>
    </subcellularLocation>
</comment>
<comment type="similarity">
    <text evidence="1">Belongs to the complex I 23 kDa subunit family.</text>
</comment>
<dbReference type="EC" id="7.1.1.-" evidence="1"/>
<dbReference type="EMBL" id="CP000157">
    <property type="protein sequence ID" value="ABC63417.1"/>
    <property type="molecule type" value="Genomic_DNA"/>
</dbReference>
<dbReference type="RefSeq" id="WP_011414253.1">
    <property type="nucleotide sequence ID" value="NC_007722.1"/>
</dbReference>
<dbReference type="SMR" id="Q2NA74"/>
<dbReference type="STRING" id="314225.ELI_06625"/>
<dbReference type="KEGG" id="eli:ELI_06625"/>
<dbReference type="eggNOG" id="COG1143">
    <property type="taxonomic scope" value="Bacteria"/>
</dbReference>
<dbReference type="HOGENOM" id="CLU_067218_5_1_5"/>
<dbReference type="OrthoDB" id="9808559at2"/>
<dbReference type="Proteomes" id="UP000008808">
    <property type="component" value="Chromosome"/>
</dbReference>
<dbReference type="GO" id="GO:0005886">
    <property type="term" value="C:plasma membrane"/>
    <property type="evidence" value="ECO:0007669"/>
    <property type="project" value="UniProtKB-SubCell"/>
</dbReference>
<dbReference type="GO" id="GO:0051539">
    <property type="term" value="F:4 iron, 4 sulfur cluster binding"/>
    <property type="evidence" value="ECO:0007669"/>
    <property type="project" value="UniProtKB-KW"/>
</dbReference>
<dbReference type="GO" id="GO:0005506">
    <property type="term" value="F:iron ion binding"/>
    <property type="evidence" value="ECO:0007669"/>
    <property type="project" value="UniProtKB-UniRule"/>
</dbReference>
<dbReference type="GO" id="GO:0050136">
    <property type="term" value="F:NADH:ubiquinone reductase (non-electrogenic) activity"/>
    <property type="evidence" value="ECO:0007669"/>
    <property type="project" value="UniProtKB-UniRule"/>
</dbReference>
<dbReference type="GO" id="GO:0048038">
    <property type="term" value="F:quinone binding"/>
    <property type="evidence" value="ECO:0007669"/>
    <property type="project" value="UniProtKB-KW"/>
</dbReference>
<dbReference type="GO" id="GO:0009060">
    <property type="term" value="P:aerobic respiration"/>
    <property type="evidence" value="ECO:0007669"/>
    <property type="project" value="TreeGrafter"/>
</dbReference>
<dbReference type="FunFam" id="3.30.70.3270:FF:000001">
    <property type="entry name" value="NADH-quinone oxidoreductase subunit I 1"/>
    <property type="match status" value="1"/>
</dbReference>
<dbReference type="Gene3D" id="3.30.70.3270">
    <property type="match status" value="1"/>
</dbReference>
<dbReference type="HAMAP" id="MF_01351">
    <property type="entry name" value="NDH1_NuoI"/>
    <property type="match status" value="1"/>
</dbReference>
<dbReference type="InterPro" id="IPR017896">
    <property type="entry name" value="4Fe4S_Fe-S-bd"/>
</dbReference>
<dbReference type="InterPro" id="IPR017900">
    <property type="entry name" value="4Fe4S_Fe_S_CS"/>
</dbReference>
<dbReference type="InterPro" id="IPR010226">
    <property type="entry name" value="NADH_quinone_OxRdtase_chainI"/>
</dbReference>
<dbReference type="NCBIfam" id="TIGR01971">
    <property type="entry name" value="NuoI"/>
    <property type="match status" value="1"/>
</dbReference>
<dbReference type="NCBIfam" id="NF004538">
    <property type="entry name" value="PRK05888.1-4"/>
    <property type="match status" value="1"/>
</dbReference>
<dbReference type="NCBIfam" id="NF004539">
    <property type="entry name" value="PRK05888.1-5"/>
    <property type="match status" value="1"/>
</dbReference>
<dbReference type="PANTHER" id="PTHR10849:SF20">
    <property type="entry name" value="NADH DEHYDROGENASE [UBIQUINONE] IRON-SULFUR PROTEIN 8, MITOCHONDRIAL"/>
    <property type="match status" value="1"/>
</dbReference>
<dbReference type="PANTHER" id="PTHR10849">
    <property type="entry name" value="NADH DEHYDROGENASE UBIQUINONE IRON-SULFUR PROTEIN 8, MITOCHONDRIAL"/>
    <property type="match status" value="1"/>
</dbReference>
<dbReference type="Pfam" id="PF12838">
    <property type="entry name" value="Fer4_7"/>
    <property type="match status" value="1"/>
</dbReference>
<dbReference type="SUPFAM" id="SSF54862">
    <property type="entry name" value="4Fe-4S ferredoxins"/>
    <property type="match status" value="1"/>
</dbReference>
<dbReference type="PROSITE" id="PS00198">
    <property type="entry name" value="4FE4S_FER_1"/>
    <property type="match status" value="2"/>
</dbReference>
<dbReference type="PROSITE" id="PS51379">
    <property type="entry name" value="4FE4S_FER_2"/>
    <property type="match status" value="2"/>
</dbReference>
<reference key="1">
    <citation type="journal article" date="2009" name="J. Bacteriol.">
        <title>Complete genome sequence of Erythrobacter litoralis HTCC2594.</title>
        <authorList>
            <person name="Oh H.M."/>
            <person name="Giovannoni S.J."/>
            <person name="Ferriera S."/>
            <person name="Johnson J."/>
            <person name="Cho J.C."/>
        </authorList>
    </citation>
    <scope>NUCLEOTIDE SEQUENCE [LARGE SCALE GENOMIC DNA]</scope>
    <source>
        <strain>HTCC2594</strain>
    </source>
</reference>
<name>NUOI_ERYLH</name>
<protein>
    <recommendedName>
        <fullName evidence="1">NADH-quinone oxidoreductase subunit I</fullName>
        <ecNumber evidence="1">7.1.1.-</ecNumber>
    </recommendedName>
    <alternativeName>
        <fullName evidence="1">NADH dehydrogenase I subunit I</fullName>
    </alternativeName>
    <alternativeName>
        <fullName evidence="1">NDH-1 subunit I</fullName>
    </alternativeName>
</protein>
<sequence>MTTATQLLKSFTLWEFLKAHALTLKYFFKPKATINYPFEKNPLSPRFRGEHALRRYPNGEERCIACKLCEAVCPAQAITIESEPRDDGSRRTTRYDIDMTKCIYCGFCQEACPVDAIVEGPNFEYSTETREELLYDKAKLLANGDKWERAIAANLEADAPYR</sequence>
<accession>Q2NA74</accession>
<proteinExistence type="inferred from homology"/>
<evidence type="ECO:0000255" key="1">
    <source>
        <dbReference type="HAMAP-Rule" id="MF_01351"/>
    </source>
</evidence>
<organism>
    <name type="scientific">Erythrobacter litoralis (strain HTCC2594)</name>
    <dbReference type="NCBI Taxonomy" id="314225"/>
    <lineage>
        <taxon>Bacteria</taxon>
        <taxon>Pseudomonadati</taxon>
        <taxon>Pseudomonadota</taxon>
        <taxon>Alphaproteobacteria</taxon>
        <taxon>Sphingomonadales</taxon>
        <taxon>Erythrobacteraceae</taxon>
        <taxon>Erythrobacter/Porphyrobacter group</taxon>
        <taxon>Erythrobacter</taxon>
    </lineage>
</organism>
<keyword id="KW-0004">4Fe-4S</keyword>
<keyword id="KW-0997">Cell inner membrane</keyword>
<keyword id="KW-1003">Cell membrane</keyword>
<keyword id="KW-0408">Iron</keyword>
<keyword id="KW-0411">Iron-sulfur</keyword>
<keyword id="KW-0472">Membrane</keyword>
<keyword id="KW-0479">Metal-binding</keyword>
<keyword id="KW-0520">NAD</keyword>
<keyword id="KW-0874">Quinone</keyword>
<keyword id="KW-1185">Reference proteome</keyword>
<keyword id="KW-0677">Repeat</keyword>
<keyword id="KW-1278">Translocase</keyword>
<keyword id="KW-0830">Ubiquinone</keyword>